<feature type="chain" id="PRO_0000030059" description="S-adenosylmethionine decarboxylase beta chain" evidence="1">
    <location>
        <begin position="1"/>
        <end position="111"/>
    </location>
</feature>
<feature type="chain" id="PRO_0000030060" description="S-adenosylmethionine decarboxylase alpha chain" evidence="1">
    <location>
        <begin position="112"/>
        <end position="264"/>
    </location>
</feature>
<feature type="active site" description="Schiff-base intermediate with substrate; via pyruvic acid" evidence="1">
    <location>
        <position position="112"/>
    </location>
</feature>
<feature type="active site" description="Proton acceptor; for processing activity" evidence="1">
    <location>
        <position position="117"/>
    </location>
</feature>
<feature type="active site" description="Proton donor; for catalytic activity" evidence="1">
    <location>
        <position position="140"/>
    </location>
</feature>
<feature type="site" description="Cleavage (non-hydrolytic); by autolysis" evidence="1">
    <location>
        <begin position="111"/>
        <end position="112"/>
    </location>
</feature>
<feature type="modified residue" description="Pyruvic acid (Ser); by autocatalysis" evidence="1">
    <location>
        <position position="112"/>
    </location>
</feature>
<proteinExistence type="inferred from homology"/>
<organism>
    <name type="scientific">Salmonella typhi</name>
    <dbReference type="NCBI Taxonomy" id="90370"/>
    <lineage>
        <taxon>Bacteria</taxon>
        <taxon>Pseudomonadati</taxon>
        <taxon>Pseudomonadota</taxon>
        <taxon>Gammaproteobacteria</taxon>
        <taxon>Enterobacterales</taxon>
        <taxon>Enterobacteriaceae</taxon>
        <taxon>Salmonella</taxon>
    </lineage>
</organism>
<protein>
    <recommendedName>
        <fullName evidence="1">S-adenosylmethionine decarboxylase proenzyme</fullName>
        <shortName evidence="1">AdoMetDC</shortName>
        <shortName evidence="1">SAMDC</shortName>
        <ecNumber evidence="1">4.1.1.50</ecNumber>
    </recommendedName>
    <component>
        <recommendedName>
            <fullName evidence="1">S-adenosylmethionine decarboxylase beta chain</fullName>
        </recommendedName>
    </component>
    <component>
        <recommendedName>
            <fullName evidence="1">S-adenosylmethionine decarboxylase alpha chain</fullName>
        </recommendedName>
    </component>
</protein>
<comment type="function">
    <text evidence="1">Catalyzes the decarboxylation of S-adenosylmethionine to S-adenosylmethioninamine (dcAdoMet), the propylamine donor required for the synthesis of the polyamines spermine and spermidine from the diamine putrescine.</text>
</comment>
<comment type="catalytic activity">
    <reaction evidence="1">
        <text>S-adenosyl-L-methionine + H(+) = S-adenosyl 3-(methylsulfanyl)propylamine + CO2</text>
        <dbReference type="Rhea" id="RHEA:15981"/>
        <dbReference type="ChEBI" id="CHEBI:15378"/>
        <dbReference type="ChEBI" id="CHEBI:16526"/>
        <dbReference type="ChEBI" id="CHEBI:57443"/>
        <dbReference type="ChEBI" id="CHEBI:59789"/>
        <dbReference type="EC" id="4.1.1.50"/>
    </reaction>
</comment>
<comment type="cofactor">
    <cofactor evidence="1">
        <name>pyruvate</name>
        <dbReference type="ChEBI" id="CHEBI:15361"/>
    </cofactor>
    <text evidence="1">Binds 1 pyruvoyl group covalently per subunit.</text>
</comment>
<comment type="pathway">
    <text evidence="1">Amine and polyamine biosynthesis; S-adenosylmethioninamine biosynthesis; S-adenosylmethioninamine from S-adenosyl-L-methionine: step 1/1.</text>
</comment>
<comment type="subunit">
    <text evidence="1">Heterooctamer of four alpha and four beta chains arranged as a tetramer of alpha/beta heterodimers.</text>
</comment>
<comment type="PTM">
    <text evidence="1">Is synthesized initially as an inactive proenzyme. Formation of the active enzyme involves a self-maturation process in which the active site pyruvoyl group is generated from an internal serine residue via an autocatalytic post-translational modification. Two non-identical subunits are generated from the proenzyme in this reaction, and the pyruvate is formed at the N-terminus of the alpha chain, which is derived from the carboxyl end of the proenzyme. The post-translation cleavage follows an unusual pathway, termed non-hydrolytic serinolysis, in which the side chain hydroxyl group of the serine supplies its oxygen atom to form the C-terminus of the beta chain, while the remainder of the serine residue undergoes an oxidative deamination to produce ammonia and the pyruvoyl group blocking the N-terminus of the alpha chain.</text>
</comment>
<comment type="similarity">
    <text evidence="1">Belongs to the prokaryotic AdoMetDC family. Type 2 subfamily.</text>
</comment>
<dbReference type="EC" id="4.1.1.50" evidence="1"/>
<dbReference type="EMBL" id="AL513382">
    <property type="protein sequence ID" value="CAD01323.1"/>
    <property type="molecule type" value="Genomic_DNA"/>
</dbReference>
<dbReference type="EMBL" id="AE014613">
    <property type="protein sequence ID" value="AAO67902.1"/>
    <property type="molecule type" value="Genomic_DNA"/>
</dbReference>
<dbReference type="RefSeq" id="NP_454778.1">
    <property type="nucleotide sequence ID" value="NC_003198.1"/>
</dbReference>
<dbReference type="RefSeq" id="WP_000734279.1">
    <property type="nucleotide sequence ID" value="NZ_WSUR01000009.1"/>
</dbReference>
<dbReference type="SMR" id="Q8Z9E3"/>
<dbReference type="STRING" id="220341.gene:17584225"/>
<dbReference type="KEGG" id="stt:t0170"/>
<dbReference type="KEGG" id="sty:STY0187"/>
<dbReference type="PATRIC" id="fig|220341.7.peg.190"/>
<dbReference type="eggNOG" id="COG1586">
    <property type="taxonomic scope" value="Bacteria"/>
</dbReference>
<dbReference type="HOGENOM" id="CLU_092007_0_0_6"/>
<dbReference type="OMA" id="HVTVHTY"/>
<dbReference type="OrthoDB" id="5290709at2"/>
<dbReference type="UniPathway" id="UPA00331">
    <property type="reaction ID" value="UER00451"/>
</dbReference>
<dbReference type="Proteomes" id="UP000000541">
    <property type="component" value="Chromosome"/>
</dbReference>
<dbReference type="Proteomes" id="UP000002670">
    <property type="component" value="Chromosome"/>
</dbReference>
<dbReference type="GO" id="GO:0005829">
    <property type="term" value="C:cytosol"/>
    <property type="evidence" value="ECO:0007669"/>
    <property type="project" value="TreeGrafter"/>
</dbReference>
<dbReference type="GO" id="GO:0004014">
    <property type="term" value="F:adenosylmethionine decarboxylase activity"/>
    <property type="evidence" value="ECO:0007669"/>
    <property type="project" value="UniProtKB-UniRule"/>
</dbReference>
<dbReference type="GO" id="GO:0008295">
    <property type="term" value="P:spermidine biosynthetic process"/>
    <property type="evidence" value="ECO:0007669"/>
    <property type="project" value="UniProtKB-UniRule"/>
</dbReference>
<dbReference type="FunFam" id="3.60.90.10:FF:000001">
    <property type="entry name" value="S-adenosylmethionine decarboxylase proenzyme"/>
    <property type="match status" value="1"/>
</dbReference>
<dbReference type="Gene3D" id="3.60.90.10">
    <property type="entry name" value="S-adenosylmethionine decarboxylase"/>
    <property type="match status" value="1"/>
</dbReference>
<dbReference type="HAMAP" id="MF_00465">
    <property type="entry name" value="AdoMetDC_2"/>
    <property type="match status" value="1"/>
</dbReference>
<dbReference type="InterPro" id="IPR003826">
    <property type="entry name" value="AdoMetDC_fam_prok"/>
</dbReference>
<dbReference type="InterPro" id="IPR009165">
    <property type="entry name" value="S-AdoMet_deCO2ase_bac"/>
</dbReference>
<dbReference type="InterPro" id="IPR016067">
    <property type="entry name" value="S-AdoMet_deCO2ase_core"/>
</dbReference>
<dbReference type="NCBIfam" id="TIGR03331">
    <property type="entry name" value="SAM_DCase_Eco"/>
    <property type="match status" value="1"/>
</dbReference>
<dbReference type="PANTHER" id="PTHR33866">
    <property type="entry name" value="S-ADENOSYLMETHIONINE DECARBOXYLASE PROENZYME"/>
    <property type="match status" value="1"/>
</dbReference>
<dbReference type="PANTHER" id="PTHR33866:SF1">
    <property type="entry name" value="S-ADENOSYLMETHIONINE DECARBOXYLASE PROENZYME"/>
    <property type="match status" value="1"/>
</dbReference>
<dbReference type="Pfam" id="PF02675">
    <property type="entry name" value="AdoMet_dc"/>
    <property type="match status" value="1"/>
</dbReference>
<dbReference type="PIRSF" id="PIRSF001356">
    <property type="entry name" value="SAM_decarboxylas"/>
    <property type="match status" value="1"/>
</dbReference>
<dbReference type="SUPFAM" id="SSF56276">
    <property type="entry name" value="S-adenosylmethionine decarboxylase"/>
    <property type="match status" value="1"/>
</dbReference>
<reference key="1">
    <citation type="journal article" date="2001" name="Nature">
        <title>Complete genome sequence of a multiple drug resistant Salmonella enterica serovar Typhi CT18.</title>
        <authorList>
            <person name="Parkhill J."/>
            <person name="Dougan G."/>
            <person name="James K.D."/>
            <person name="Thomson N.R."/>
            <person name="Pickard D."/>
            <person name="Wain J."/>
            <person name="Churcher C.M."/>
            <person name="Mungall K.L."/>
            <person name="Bentley S.D."/>
            <person name="Holden M.T.G."/>
            <person name="Sebaihia M."/>
            <person name="Baker S."/>
            <person name="Basham D."/>
            <person name="Brooks K."/>
            <person name="Chillingworth T."/>
            <person name="Connerton P."/>
            <person name="Cronin A."/>
            <person name="Davis P."/>
            <person name="Davies R.M."/>
            <person name="Dowd L."/>
            <person name="White N."/>
            <person name="Farrar J."/>
            <person name="Feltwell T."/>
            <person name="Hamlin N."/>
            <person name="Haque A."/>
            <person name="Hien T.T."/>
            <person name="Holroyd S."/>
            <person name="Jagels K."/>
            <person name="Krogh A."/>
            <person name="Larsen T.S."/>
            <person name="Leather S."/>
            <person name="Moule S."/>
            <person name="O'Gaora P."/>
            <person name="Parry C."/>
            <person name="Quail M.A."/>
            <person name="Rutherford K.M."/>
            <person name="Simmonds M."/>
            <person name="Skelton J."/>
            <person name="Stevens K."/>
            <person name="Whitehead S."/>
            <person name="Barrell B.G."/>
        </authorList>
    </citation>
    <scope>NUCLEOTIDE SEQUENCE [LARGE SCALE GENOMIC DNA]</scope>
    <source>
        <strain>CT18</strain>
    </source>
</reference>
<reference key="2">
    <citation type="journal article" date="2003" name="J. Bacteriol.">
        <title>Comparative genomics of Salmonella enterica serovar Typhi strains Ty2 and CT18.</title>
        <authorList>
            <person name="Deng W."/>
            <person name="Liou S.-R."/>
            <person name="Plunkett G. III"/>
            <person name="Mayhew G.F."/>
            <person name="Rose D.J."/>
            <person name="Burland V."/>
            <person name="Kodoyianni V."/>
            <person name="Schwartz D.C."/>
            <person name="Blattner F.R."/>
        </authorList>
    </citation>
    <scope>NUCLEOTIDE SEQUENCE [LARGE SCALE GENOMIC DNA]</scope>
    <source>
        <strain>ATCC 700931 / Ty2</strain>
    </source>
</reference>
<accession>Q8Z9E3</accession>
<evidence type="ECO:0000255" key="1">
    <source>
        <dbReference type="HAMAP-Rule" id="MF_00465"/>
    </source>
</evidence>
<name>SPED_SALTI</name>
<gene>
    <name evidence="1" type="primary">speD</name>
    <name type="ordered locus">STY0187</name>
    <name type="ordered locus">t0170</name>
</gene>
<keyword id="KW-0068">Autocatalytic cleavage</keyword>
<keyword id="KW-0210">Decarboxylase</keyword>
<keyword id="KW-0456">Lyase</keyword>
<keyword id="KW-0620">Polyamine biosynthesis</keyword>
<keyword id="KW-0670">Pyruvate</keyword>
<keyword id="KW-0949">S-adenosyl-L-methionine</keyword>
<keyword id="KW-0704">Schiff base</keyword>
<keyword id="KW-0745">Spermidine biosynthesis</keyword>
<keyword id="KW-0865">Zymogen</keyword>
<sequence length="264" mass="30414">MKKLKLHGFNNLTKSLSFCIYDICYAKTAEERDGYIAYIDELYNANRLTEILSETCSIIGANILNIARQDYEPQGASVTILVSEEPIDPKLIDQTEHPGPLPETVVAHLDKSHICVHTYPESHPEGGLCTFRADIEVSTCGVISPLKALNYLIHQLESDIVTIDYRVRGFTRDVNGMKHFIDHEINSIQNFMSEDMKSLYDMVDVNVYQENIFHTKMLLKEFDLKHYMFHTKPEDLTETERQQITAALWKEMREIYYGRNISAV</sequence>